<reference key="1">
    <citation type="submission" date="2008-10" db="EMBL/GenBank/DDBJ databases">
        <title>Genome sequence of Bacillus cereus AH820.</title>
        <authorList>
            <person name="Dodson R.J."/>
            <person name="Durkin A.S."/>
            <person name="Rosovitz M.J."/>
            <person name="Rasko D.A."/>
            <person name="Hoffmaster A."/>
            <person name="Ravel J."/>
            <person name="Sutton G."/>
        </authorList>
    </citation>
    <scope>NUCLEOTIDE SEQUENCE [LARGE SCALE GENOMIC DNA]</scope>
    <source>
        <strain>AH820</strain>
    </source>
</reference>
<comment type="function">
    <text evidence="1">Cell division protein that is part of the divisome complex and is recruited early to the Z-ring. Probably stimulates Z-ring formation, perhaps through the cross-linking of FtsZ protofilaments. Its function overlaps with FtsA.</text>
</comment>
<comment type="subunit">
    <text evidence="1">Homodimer. Interacts with FtsZ.</text>
</comment>
<comment type="subcellular location">
    <subcellularLocation>
        <location evidence="1">Cytoplasm</location>
    </subcellularLocation>
    <text evidence="1">Localizes to the division site, in a FtsZ-dependent manner.</text>
</comment>
<comment type="similarity">
    <text evidence="1">Belongs to the SepF family.</text>
</comment>
<sequence>MSWSKVKYFFFDTPEEKEAAQYSYEKEQTDMKKQQDPPEQQDVTFPKAQPKQNVVSIETAKQSSKVVLLEPRTYSEAQGIADHLKGRRAVVINLQRMSTDQAVRIVDFLSGTVYAIGGDIQKIGPKTFMCTPENVDIVGAISELFGEEEDTNIKRW</sequence>
<keyword id="KW-0131">Cell cycle</keyword>
<keyword id="KW-0132">Cell division</keyword>
<keyword id="KW-0963">Cytoplasm</keyword>
<keyword id="KW-0717">Septation</keyword>
<name>SEPF_BACC0</name>
<evidence type="ECO:0000255" key="1">
    <source>
        <dbReference type="HAMAP-Rule" id="MF_01197"/>
    </source>
</evidence>
<evidence type="ECO:0000256" key="2">
    <source>
        <dbReference type="SAM" id="MobiDB-lite"/>
    </source>
</evidence>
<organism>
    <name type="scientific">Bacillus cereus (strain AH820)</name>
    <dbReference type="NCBI Taxonomy" id="405535"/>
    <lineage>
        <taxon>Bacteria</taxon>
        <taxon>Bacillati</taxon>
        <taxon>Bacillota</taxon>
        <taxon>Bacilli</taxon>
        <taxon>Bacillales</taxon>
        <taxon>Bacillaceae</taxon>
        <taxon>Bacillus</taxon>
        <taxon>Bacillus cereus group</taxon>
    </lineage>
</organism>
<dbReference type="EMBL" id="CP001283">
    <property type="protein sequence ID" value="ACK92023.1"/>
    <property type="molecule type" value="Genomic_DNA"/>
</dbReference>
<dbReference type="RefSeq" id="WP_000119136.1">
    <property type="nucleotide sequence ID" value="NC_011773.1"/>
</dbReference>
<dbReference type="SMR" id="B7JJY6"/>
<dbReference type="KEGG" id="bcu:BCAH820_3913"/>
<dbReference type="HOGENOM" id="CLU_078499_4_1_9"/>
<dbReference type="Proteomes" id="UP000001363">
    <property type="component" value="Chromosome"/>
</dbReference>
<dbReference type="GO" id="GO:0005737">
    <property type="term" value="C:cytoplasm"/>
    <property type="evidence" value="ECO:0007669"/>
    <property type="project" value="UniProtKB-SubCell"/>
</dbReference>
<dbReference type="GO" id="GO:0000917">
    <property type="term" value="P:division septum assembly"/>
    <property type="evidence" value="ECO:0007669"/>
    <property type="project" value="UniProtKB-KW"/>
</dbReference>
<dbReference type="GO" id="GO:0043093">
    <property type="term" value="P:FtsZ-dependent cytokinesis"/>
    <property type="evidence" value="ECO:0007669"/>
    <property type="project" value="UniProtKB-UniRule"/>
</dbReference>
<dbReference type="Gene3D" id="3.30.110.150">
    <property type="entry name" value="SepF-like protein"/>
    <property type="match status" value="1"/>
</dbReference>
<dbReference type="HAMAP" id="MF_01197">
    <property type="entry name" value="SepF"/>
    <property type="match status" value="1"/>
</dbReference>
<dbReference type="InterPro" id="IPR023052">
    <property type="entry name" value="Cell_div_SepF"/>
</dbReference>
<dbReference type="InterPro" id="IPR007561">
    <property type="entry name" value="Cell_div_SepF/SepF-rel"/>
</dbReference>
<dbReference type="InterPro" id="IPR038594">
    <property type="entry name" value="SepF-like_sf"/>
</dbReference>
<dbReference type="PANTHER" id="PTHR35798">
    <property type="entry name" value="CELL DIVISION PROTEIN SEPF"/>
    <property type="match status" value="1"/>
</dbReference>
<dbReference type="PANTHER" id="PTHR35798:SF1">
    <property type="entry name" value="CELL DIVISION PROTEIN SEPF"/>
    <property type="match status" value="1"/>
</dbReference>
<dbReference type="Pfam" id="PF04472">
    <property type="entry name" value="SepF"/>
    <property type="match status" value="1"/>
</dbReference>
<proteinExistence type="inferred from homology"/>
<protein>
    <recommendedName>
        <fullName evidence="1">Cell division protein SepF</fullName>
    </recommendedName>
</protein>
<feature type="chain" id="PRO_1000138458" description="Cell division protein SepF">
    <location>
        <begin position="1"/>
        <end position="156"/>
    </location>
</feature>
<feature type="region of interest" description="Disordered" evidence="2">
    <location>
        <begin position="23"/>
        <end position="50"/>
    </location>
</feature>
<feature type="compositionally biased region" description="Basic and acidic residues" evidence="2">
    <location>
        <begin position="23"/>
        <end position="36"/>
    </location>
</feature>
<accession>B7JJY6</accession>
<gene>
    <name evidence="1" type="primary">sepF</name>
    <name type="ordered locus">BCAH820_3913</name>
</gene>